<feature type="signal peptide" evidence="2">
    <location>
        <begin position="1"/>
        <end position="21"/>
    </location>
</feature>
<feature type="chain" id="PRO_0000327844" description="Alpha-mannosidase E">
    <location>
        <begin position="22"/>
        <end position="1123"/>
    </location>
</feature>
<feature type="topological domain" description="Extracellular" evidence="2">
    <location>
        <begin position="22"/>
        <end position="1072"/>
    </location>
</feature>
<feature type="transmembrane region" description="Helical" evidence="2">
    <location>
        <begin position="1073"/>
        <end position="1093"/>
    </location>
</feature>
<feature type="topological domain" description="Cytoplasmic" evidence="2">
    <location>
        <begin position="1094"/>
        <end position="1123"/>
    </location>
</feature>
<feature type="active site" description="Nucleophile" evidence="1">
    <location>
        <position position="150"/>
    </location>
</feature>
<feature type="binding site" evidence="1">
    <location>
        <position position="67"/>
    </location>
    <ligand>
        <name>Zn(2+)</name>
        <dbReference type="ChEBI" id="CHEBI:29105"/>
    </ligand>
</feature>
<feature type="binding site" evidence="1">
    <location>
        <position position="69"/>
    </location>
    <ligand>
        <name>Zn(2+)</name>
        <dbReference type="ChEBI" id="CHEBI:29105"/>
    </ligand>
</feature>
<feature type="binding site" evidence="1">
    <location>
        <position position="150"/>
    </location>
    <ligand>
        <name>Zn(2+)</name>
        <dbReference type="ChEBI" id="CHEBI:29105"/>
    </ligand>
</feature>
<feature type="binding site" evidence="1">
    <location>
        <position position="409"/>
    </location>
    <ligand>
        <name>Zn(2+)</name>
        <dbReference type="ChEBI" id="CHEBI:29105"/>
    </ligand>
</feature>
<feature type="glycosylation site" description="N-linked (GlcNAc...) asparagine" evidence="2">
    <location>
        <position position="2"/>
    </location>
</feature>
<feature type="glycosylation site" description="N-linked (GlcNAc...) asparagine" evidence="2">
    <location>
        <position position="38"/>
    </location>
</feature>
<feature type="glycosylation site" description="N-linked (GlcNAc...) asparagine" evidence="2">
    <location>
        <position position="140"/>
    </location>
</feature>
<feature type="glycosylation site" description="N-linked (GlcNAc...) asparagine" evidence="2">
    <location>
        <position position="521"/>
    </location>
</feature>
<feature type="glycosylation site" description="N-linked (GlcNAc...) asparagine" evidence="2">
    <location>
        <position position="675"/>
    </location>
</feature>
<feature type="glycosylation site" description="N-linked (GlcNAc...) asparagine" evidence="2">
    <location>
        <position position="858"/>
    </location>
</feature>
<feature type="glycosylation site" description="N-linked (GlcNAc...) asparagine" evidence="2">
    <location>
        <position position="887"/>
    </location>
</feature>
<feature type="glycosylation site" description="N-linked (GlcNAc...) asparagine" evidence="2">
    <location>
        <position position="975"/>
    </location>
</feature>
<feature type="glycosylation site" description="N-linked (GlcNAc...) asparagine" evidence="2">
    <location>
        <position position="990"/>
    </location>
</feature>
<dbReference type="EC" id="3.2.1.24"/>
<dbReference type="EMBL" id="AAFI02000023">
    <property type="protein sequence ID" value="EAS66899.1"/>
    <property type="molecule type" value="Genomic_DNA"/>
</dbReference>
<dbReference type="RefSeq" id="XP_001134583.1">
    <property type="nucleotide sequence ID" value="XM_001134583.1"/>
</dbReference>
<dbReference type="SMR" id="Q1ZXI8"/>
<dbReference type="FunCoup" id="Q1ZXI8">
    <property type="interactions" value="5"/>
</dbReference>
<dbReference type="GlyCosmos" id="Q1ZXI8">
    <property type="glycosylation" value="9 sites, No reported glycans"/>
</dbReference>
<dbReference type="GlyGen" id="Q1ZXI8">
    <property type="glycosylation" value="9 sites"/>
</dbReference>
<dbReference type="PaxDb" id="44689-DDB0231615"/>
<dbReference type="EnsemblProtists" id="EAS66899">
    <property type="protein sequence ID" value="EAS66899"/>
    <property type="gene ID" value="DDB_G0278651"/>
</dbReference>
<dbReference type="GeneID" id="8621484"/>
<dbReference type="KEGG" id="ddi:DDB_G0278651"/>
<dbReference type="dictyBase" id="DDB_G0278651">
    <property type="gene designation" value="manE"/>
</dbReference>
<dbReference type="VEuPathDB" id="AmoebaDB:DDB_G0278651"/>
<dbReference type="eggNOG" id="KOG1958">
    <property type="taxonomic scope" value="Eukaryota"/>
</dbReference>
<dbReference type="HOGENOM" id="CLU_268576_0_0_1"/>
<dbReference type="InParanoid" id="Q1ZXI8"/>
<dbReference type="OMA" id="DQNGYQL"/>
<dbReference type="PhylomeDB" id="Q1ZXI8"/>
<dbReference type="Reactome" id="R-DDI-8853383">
    <property type="pathway name" value="Lysosomal oligosaccharide catabolism"/>
</dbReference>
<dbReference type="PRO" id="PR:Q1ZXI8"/>
<dbReference type="Proteomes" id="UP000002195">
    <property type="component" value="Chromosome 3"/>
</dbReference>
<dbReference type="GO" id="GO:0005764">
    <property type="term" value="C:lysosome"/>
    <property type="evidence" value="ECO:0000318"/>
    <property type="project" value="GO_Central"/>
</dbReference>
<dbReference type="GO" id="GO:0016020">
    <property type="term" value="C:membrane"/>
    <property type="evidence" value="ECO:0007669"/>
    <property type="project" value="UniProtKB-SubCell"/>
</dbReference>
<dbReference type="GO" id="GO:0004559">
    <property type="term" value="F:alpha-mannosidase activity"/>
    <property type="evidence" value="ECO:0000318"/>
    <property type="project" value="GO_Central"/>
</dbReference>
<dbReference type="GO" id="GO:0030246">
    <property type="term" value="F:carbohydrate binding"/>
    <property type="evidence" value="ECO:0007669"/>
    <property type="project" value="InterPro"/>
</dbReference>
<dbReference type="GO" id="GO:0046872">
    <property type="term" value="F:metal ion binding"/>
    <property type="evidence" value="ECO:0007669"/>
    <property type="project" value="UniProtKB-KW"/>
</dbReference>
<dbReference type="GO" id="GO:0006013">
    <property type="term" value="P:mannose metabolic process"/>
    <property type="evidence" value="ECO:0007669"/>
    <property type="project" value="InterPro"/>
</dbReference>
<dbReference type="CDD" id="cd00451">
    <property type="entry name" value="GH38N_AMII_euk"/>
    <property type="match status" value="1"/>
</dbReference>
<dbReference type="FunFam" id="1.20.1270.50:FF:000001">
    <property type="entry name" value="Alpha-mannosidase"/>
    <property type="match status" value="1"/>
</dbReference>
<dbReference type="FunFam" id="2.70.98.30:FF:000012">
    <property type="entry name" value="Alpha-mannosidase"/>
    <property type="match status" value="1"/>
</dbReference>
<dbReference type="FunFam" id="2.60.40.1180:FF:000094">
    <property type="entry name" value="Alpha-mannosidase D"/>
    <property type="match status" value="1"/>
</dbReference>
<dbReference type="FunFam" id="3.20.110.10:FF:000024">
    <property type="entry name" value="Alpha-mannosidase E"/>
    <property type="match status" value="1"/>
</dbReference>
<dbReference type="Gene3D" id="2.60.40.1360">
    <property type="match status" value="1"/>
</dbReference>
<dbReference type="Gene3D" id="3.20.110.10">
    <property type="entry name" value="Glycoside hydrolase 38, N terminal domain"/>
    <property type="match status" value="2"/>
</dbReference>
<dbReference type="Gene3D" id="1.20.1270.50">
    <property type="entry name" value="Glycoside hydrolase family 38, central domain"/>
    <property type="match status" value="1"/>
</dbReference>
<dbReference type="Gene3D" id="2.60.40.1180">
    <property type="entry name" value="Golgi alpha-mannosidase II"/>
    <property type="match status" value="1"/>
</dbReference>
<dbReference type="Gene3D" id="2.70.98.30">
    <property type="entry name" value="Golgi alpha-mannosidase II, domain 4"/>
    <property type="match status" value="1"/>
</dbReference>
<dbReference type="InterPro" id="IPR011013">
    <property type="entry name" value="Gal_mutarotase_sf_dom"/>
</dbReference>
<dbReference type="InterPro" id="IPR011330">
    <property type="entry name" value="Glyco_hydro/deAcase_b/a-brl"/>
</dbReference>
<dbReference type="InterPro" id="IPR011682">
    <property type="entry name" value="Glyco_hydro_38_C"/>
</dbReference>
<dbReference type="InterPro" id="IPR015341">
    <property type="entry name" value="Glyco_hydro_38_cen"/>
</dbReference>
<dbReference type="InterPro" id="IPR037094">
    <property type="entry name" value="Glyco_hydro_38_cen_sf"/>
</dbReference>
<dbReference type="InterPro" id="IPR000602">
    <property type="entry name" value="Glyco_hydro_38_N"/>
</dbReference>
<dbReference type="InterPro" id="IPR027291">
    <property type="entry name" value="Glyco_hydro_38_N_sf"/>
</dbReference>
<dbReference type="InterPro" id="IPR028995">
    <property type="entry name" value="Glyco_hydro_57/38_cen_sf"/>
</dbReference>
<dbReference type="InterPro" id="IPR013780">
    <property type="entry name" value="Glyco_hydro_b"/>
</dbReference>
<dbReference type="InterPro" id="IPR050843">
    <property type="entry name" value="Glycosyl_Hydrlase_38"/>
</dbReference>
<dbReference type="PANTHER" id="PTHR11607">
    <property type="entry name" value="ALPHA-MANNOSIDASE"/>
    <property type="match status" value="1"/>
</dbReference>
<dbReference type="PANTHER" id="PTHR11607:SF39">
    <property type="entry name" value="ALPHA-MANNOSIDASE D-RELATED"/>
    <property type="match status" value="1"/>
</dbReference>
<dbReference type="Pfam" id="PF09261">
    <property type="entry name" value="Alpha-mann_mid"/>
    <property type="match status" value="1"/>
</dbReference>
<dbReference type="Pfam" id="PF07748">
    <property type="entry name" value="Glyco_hydro_38C"/>
    <property type="match status" value="1"/>
</dbReference>
<dbReference type="Pfam" id="PF01074">
    <property type="entry name" value="Glyco_hydro_38N"/>
    <property type="match status" value="2"/>
</dbReference>
<dbReference type="SMART" id="SM00872">
    <property type="entry name" value="Alpha-mann_mid"/>
    <property type="match status" value="1"/>
</dbReference>
<dbReference type="SUPFAM" id="SSF88688">
    <property type="entry name" value="Families 57/38 glycoside transferase middle domain"/>
    <property type="match status" value="1"/>
</dbReference>
<dbReference type="SUPFAM" id="SSF74650">
    <property type="entry name" value="Galactose mutarotase-like"/>
    <property type="match status" value="1"/>
</dbReference>
<dbReference type="SUPFAM" id="SSF88713">
    <property type="entry name" value="Glycoside hydrolase/deacetylase"/>
    <property type="match status" value="1"/>
</dbReference>
<evidence type="ECO:0000250" key="1"/>
<evidence type="ECO:0000255" key="2"/>
<evidence type="ECO:0000305" key="3"/>
<proteinExistence type="inferred from homology"/>
<protein>
    <recommendedName>
        <fullName>Alpha-mannosidase E</fullName>
        <ecNumber>3.2.1.24</ecNumber>
    </recommendedName>
</protein>
<sequence length="1123" mass="129935">MNKTKLIKIIFVIGVWILLSTFIINIYNENFEIVNYNNNSQSLKKIFQLNGDLKDEKLSIFLIPHSHCDSGWLQDYDWYYNHVVQYILSGIVNELNLDKEKKFNWVEIGGWVQNDEATATIDDVITQMTQGHQWLKDTLNYTIEYAWQIDPFGYSSSTPTIFSSMGIKGLIINRVSDDVKSYMKSAKEMEFIWKGSESLGEQSQMLVSTLNVHYDYPKHIDPKKDFSLEERVKGFTKYIKDLSNTRESSILMIPLGDDFRYSNAKNEFSVSKEWLKVIQDNKEKYNIKEIKYATIDEYFIALEDEFMNKLGKTVEENLKTGFSSTLSLYNKDFFPYSTGDLEYWTGYYTTRPLLKRLIRESSLLQKSSDILYTLAIGENSNNQIDINNLQTLSNQLNENRNTIALVQHHDIVTGTSRSFVLNDNFQRLQKSRISNYNIISNSLEYLLNKDNNNNENTDSTNEPFNFENVIDLSNEINNQYSLVFHNTLGWEVNQHVSFRIKVNKNDNQLLESIQLVEAISNKTIQIQIIPIQDDSNCQSIENNYIVFAIINLPPLGLNTYYLSISSNEDSKPNTILSKPKLLKKGNEINFNNNRFKVEFESNGLISKITDKNSNEIKTIEQTFHQYSTKKSGPYIFNVKGGKKHGFLENPDKFIYHDGPLVSQLTMLYGVDDGCNVTSIVVQRIYKNNEIDNSNSKSLITENYIETGYSINGDMNRETTINYKVKDLENDDIFYTDNGLESRKRIYNHDRTVNQNYYPVLGYIKLKETSENNNHQYTVYVDRSVGATSPSDGEMEIMIHRTMDTDDWKGVNWPSKDIGRSDAKLYFNMDLVNNQLQNEKRISLHITNQPIMFVKKHNNQTGYLLKYSPLSNQLPSNIHLQSLLTLKNNTVGLRLFNIHEVDSNTQSTTDTDKSTLFNELEISNFIETGLSFLKLTKNNLIDKYSTRINKKFPVKCGESEYSFINEKPSSIIFSNNGTNNIIDGENKGENNKTIETIQIKPHEIKSFTFNFNFQLDQIIPNNNNYAINKELNNEYIEQSIENQRYEYDFSFFPIKPTFYDDRGKYNRPNHLALILSLSIGTPAGILIIVIALVVIYKKRKNRKTLTSSYSLLNLILKDRADSSP</sequence>
<keyword id="KW-0325">Glycoprotein</keyword>
<keyword id="KW-0326">Glycosidase</keyword>
<keyword id="KW-0378">Hydrolase</keyword>
<keyword id="KW-0472">Membrane</keyword>
<keyword id="KW-0479">Metal-binding</keyword>
<keyword id="KW-1185">Reference proteome</keyword>
<keyword id="KW-0732">Signal</keyword>
<keyword id="KW-0812">Transmembrane</keyword>
<keyword id="KW-1133">Transmembrane helix</keyword>
<keyword id="KW-0862">Zinc</keyword>
<comment type="catalytic activity">
    <reaction>
        <text>Hydrolysis of terminal, non-reducing alpha-D-mannose residues in alpha-D-mannosides.</text>
        <dbReference type="EC" id="3.2.1.24"/>
    </reaction>
</comment>
<comment type="cofactor">
    <cofactor evidence="1">
        <name>Zn(2+)</name>
        <dbReference type="ChEBI" id="CHEBI:29105"/>
    </cofactor>
    <text evidence="1">Binds 1 zinc ion per subunit.</text>
</comment>
<comment type="subcellular location">
    <subcellularLocation>
        <location evidence="3">Membrane</location>
        <topology evidence="3">Single-pass type I membrane protein</topology>
    </subcellularLocation>
</comment>
<comment type="similarity">
    <text evidence="3">Belongs to the glycosyl hydrolase 38 family.</text>
</comment>
<reference key="1">
    <citation type="journal article" date="2005" name="Nature">
        <title>The genome of the social amoeba Dictyostelium discoideum.</title>
        <authorList>
            <person name="Eichinger L."/>
            <person name="Pachebat J.A."/>
            <person name="Gloeckner G."/>
            <person name="Rajandream M.A."/>
            <person name="Sucgang R."/>
            <person name="Berriman M."/>
            <person name="Song J."/>
            <person name="Olsen R."/>
            <person name="Szafranski K."/>
            <person name="Xu Q."/>
            <person name="Tunggal B."/>
            <person name="Kummerfeld S."/>
            <person name="Madera M."/>
            <person name="Konfortov B.A."/>
            <person name="Rivero F."/>
            <person name="Bankier A.T."/>
            <person name="Lehmann R."/>
            <person name="Hamlin N."/>
            <person name="Davies R."/>
            <person name="Gaudet P."/>
            <person name="Fey P."/>
            <person name="Pilcher K."/>
            <person name="Chen G."/>
            <person name="Saunders D."/>
            <person name="Sodergren E.J."/>
            <person name="Davis P."/>
            <person name="Kerhornou A."/>
            <person name="Nie X."/>
            <person name="Hall N."/>
            <person name="Anjard C."/>
            <person name="Hemphill L."/>
            <person name="Bason N."/>
            <person name="Farbrother P."/>
            <person name="Desany B."/>
            <person name="Just E."/>
            <person name="Morio T."/>
            <person name="Rost R."/>
            <person name="Churcher C.M."/>
            <person name="Cooper J."/>
            <person name="Haydock S."/>
            <person name="van Driessche N."/>
            <person name="Cronin A."/>
            <person name="Goodhead I."/>
            <person name="Muzny D.M."/>
            <person name="Mourier T."/>
            <person name="Pain A."/>
            <person name="Lu M."/>
            <person name="Harper D."/>
            <person name="Lindsay R."/>
            <person name="Hauser H."/>
            <person name="James K.D."/>
            <person name="Quiles M."/>
            <person name="Madan Babu M."/>
            <person name="Saito T."/>
            <person name="Buchrieser C."/>
            <person name="Wardroper A."/>
            <person name="Felder M."/>
            <person name="Thangavelu M."/>
            <person name="Johnson D."/>
            <person name="Knights A."/>
            <person name="Loulseged H."/>
            <person name="Mungall K.L."/>
            <person name="Oliver K."/>
            <person name="Price C."/>
            <person name="Quail M.A."/>
            <person name="Urushihara H."/>
            <person name="Hernandez J."/>
            <person name="Rabbinowitsch E."/>
            <person name="Steffen D."/>
            <person name="Sanders M."/>
            <person name="Ma J."/>
            <person name="Kohara Y."/>
            <person name="Sharp S."/>
            <person name="Simmonds M.N."/>
            <person name="Spiegler S."/>
            <person name="Tivey A."/>
            <person name="Sugano S."/>
            <person name="White B."/>
            <person name="Walker D."/>
            <person name="Woodward J.R."/>
            <person name="Winckler T."/>
            <person name="Tanaka Y."/>
            <person name="Shaulsky G."/>
            <person name="Schleicher M."/>
            <person name="Weinstock G.M."/>
            <person name="Rosenthal A."/>
            <person name="Cox E.C."/>
            <person name="Chisholm R.L."/>
            <person name="Gibbs R.A."/>
            <person name="Loomis W.F."/>
            <person name="Platzer M."/>
            <person name="Kay R.R."/>
            <person name="Williams J.G."/>
            <person name="Dear P.H."/>
            <person name="Noegel A.A."/>
            <person name="Barrell B.G."/>
            <person name="Kuspa A."/>
        </authorList>
    </citation>
    <scope>NUCLEOTIDE SEQUENCE [LARGE SCALE GENOMIC DNA]</scope>
    <source>
        <strain>AX4</strain>
    </source>
</reference>
<name>MANE_DICDI</name>
<gene>
    <name type="primary">manE</name>
    <name type="ORF">DDB_G0278651</name>
</gene>
<organism>
    <name type="scientific">Dictyostelium discoideum</name>
    <name type="common">Social amoeba</name>
    <dbReference type="NCBI Taxonomy" id="44689"/>
    <lineage>
        <taxon>Eukaryota</taxon>
        <taxon>Amoebozoa</taxon>
        <taxon>Evosea</taxon>
        <taxon>Eumycetozoa</taxon>
        <taxon>Dictyostelia</taxon>
        <taxon>Dictyosteliales</taxon>
        <taxon>Dictyosteliaceae</taxon>
        <taxon>Dictyostelium</taxon>
    </lineage>
</organism>
<accession>Q1ZXI8</accession>